<comment type="function">
    <text evidence="1">This protein is located at the 30S-50S ribosomal subunit interface and may play a role in the structure and function of the aminoacyl-tRNA binding site.</text>
</comment>
<comment type="similarity">
    <text evidence="1">Belongs to the bacterial ribosomal protein bL19 family.</text>
</comment>
<accession>Q48UG3</accession>
<dbReference type="EMBL" id="CP000056">
    <property type="protein sequence ID" value="AAX71643.1"/>
    <property type="molecule type" value="Genomic_DNA"/>
</dbReference>
<dbReference type="RefSeq" id="WP_002985298.1">
    <property type="nucleotide sequence ID" value="NC_007296.2"/>
</dbReference>
<dbReference type="SMR" id="Q48UG3"/>
<dbReference type="GeneID" id="69901140"/>
<dbReference type="KEGG" id="spb:M28_Spy0529"/>
<dbReference type="HOGENOM" id="CLU_103507_2_1_9"/>
<dbReference type="GO" id="GO:0022625">
    <property type="term" value="C:cytosolic large ribosomal subunit"/>
    <property type="evidence" value="ECO:0007669"/>
    <property type="project" value="TreeGrafter"/>
</dbReference>
<dbReference type="GO" id="GO:0003735">
    <property type="term" value="F:structural constituent of ribosome"/>
    <property type="evidence" value="ECO:0007669"/>
    <property type="project" value="InterPro"/>
</dbReference>
<dbReference type="GO" id="GO:0006412">
    <property type="term" value="P:translation"/>
    <property type="evidence" value="ECO:0007669"/>
    <property type="project" value="UniProtKB-UniRule"/>
</dbReference>
<dbReference type="FunFam" id="2.30.30.790:FF:000001">
    <property type="entry name" value="50S ribosomal protein L19"/>
    <property type="match status" value="1"/>
</dbReference>
<dbReference type="Gene3D" id="2.30.30.790">
    <property type="match status" value="1"/>
</dbReference>
<dbReference type="HAMAP" id="MF_00402">
    <property type="entry name" value="Ribosomal_bL19"/>
    <property type="match status" value="1"/>
</dbReference>
<dbReference type="InterPro" id="IPR001857">
    <property type="entry name" value="Ribosomal_bL19"/>
</dbReference>
<dbReference type="InterPro" id="IPR018257">
    <property type="entry name" value="Ribosomal_bL19_CS"/>
</dbReference>
<dbReference type="InterPro" id="IPR038657">
    <property type="entry name" value="Ribosomal_bL19_sf"/>
</dbReference>
<dbReference type="InterPro" id="IPR008991">
    <property type="entry name" value="Translation_prot_SH3-like_sf"/>
</dbReference>
<dbReference type="NCBIfam" id="TIGR01024">
    <property type="entry name" value="rplS_bact"/>
    <property type="match status" value="1"/>
</dbReference>
<dbReference type="PANTHER" id="PTHR15680:SF9">
    <property type="entry name" value="LARGE RIBOSOMAL SUBUNIT PROTEIN BL19M"/>
    <property type="match status" value="1"/>
</dbReference>
<dbReference type="PANTHER" id="PTHR15680">
    <property type="entry name" value="RIBOSOMAL PROTEIN L19"/>
    <property type="match status" value="1"/>
</dbReference>
<dbReference type="Pfam" id="PF01245">
    <property type="entry name" value="Ribosomal_L19"/>
    <property type="match status" value="1"/>
</dbReference>
<dbReference type="PIRSF" id="PIRSF002191">
    <property type="entry name" value="Ribosomal_L19"/>
    <property type="match status" value="1"/>
</dbReference>
<dbReference type="PRINTS" id="PR00061">
    <property type="entry name" value="RIBOSOMALL19"/>
</dbReference>
<dbReference type="SUPFAM" id="SSF50104">
    <property type="entry name" value="Translation proteins SH3-like domain"/>
    <property type="match status" value="1"/>
</dbReference>
<dbReference type="PROSITE" id="PS01015">
    <property type="entry name" value="RIBOSOMAL_L19"/>
    <property type="match status" value="1"/>
</dbReference>
<gene>
    <name evidence="1" type="primary">rplS</name>
    <name type="ordered locus">M28_Spy0529</name>
</gene>
<evidence type="ECO:0000255" key="1">
    <source>
        <dbReference type="HAMAP-Rule" id="MF_00402"/>
    </source>
</evidence>
<evidence type="ECO:0000305" key="2"/>
<proteinExistence type="inferred from homology"/>
<feature type="chain" id="PRO_0000226878" description="Large ribosomal subunit protein bL19">
    <location>
        <begin position="1"/>
        <end position="115"/>
    </location>
</feature>
<keyword id="KW-0687">Ribonucleoprotein</keyword>
<keyword id="KW-0689">Ribosomal protein</keyword>
<sequence>MNPLIQSLTEGQLRSDIPNFRPGDTVRVHAKVVEGTRERIQIFEGVVISRKGQGISEMYTVRKISGGIGVERTFPIHTPRVDKIEVIRHGKVRRAKLYYLRALQGKAARIKEIRR</sequence>
<protein>
    <recommendedName>
        <fullName evidence="1">Large ribosomal subunit protein bL19</fullName>
    </recommendedName>
    <alternativeName>
        <fullName evidence="2">50S ribosomal protein L19</fullName>
    </alternativeName>
</protein>
<reference key="1">
    <citation type="journal article" date="2005" name="J. Infect. Dis.">
        <title>Genome sequence of a serotype M28 strain of group A Streptococcus: potential new insights into puerperal sepsis and bacterial disease specificity.</title>
        <authorList>
            <person name="Green N.M."/>
            <person name="Zhang S."/>
            <person name="Porcella S.F."/>
            <person name="Nagiec M.J."/>
            <person name="Barbian K.D."/>
            <person name="Beres S.B."/>
            <person name="Lefebvre R.B."/>
            <person name="Musser J.M."/>
        </authorList>
    </citation>
    <scope>NUCLEOTIDE SEQUENCE [LARGE SCALE GENOMIC DNA]</scope>
    <source>
        <strain>MGAS6180</strain>
    </source>
</reference>
<name>RL19_STRPM</name>
<organism>
    <name type="scientific">Streptococcus pyogenes serotype M28 (strain MGAS6180)</name>
    <dbReference type="NCBI Taxonomy" id="319701"/>
    <lineage>
        <taxon>Bacteria</taxon>
        <taxon>Bacillati</taxon>
        <taxon>Bacillota</taxon>
        <taxon>Bacilli</taxon>
        <taxon>Lactobacillales</taxon>
        <taxon>Streptococcaceae</taxon>
        <taxon>Streptococcus</taxon>
    </lineage>
</organism>